<reference key="1">
    <citation type="submission" date="2006-12" db="EMBL/GenBank/DDBJ databases">
        <title>Complete sequence of Shewanella sp. W3-18-1.</title>
        <authorList>
            <consortium name="US DOE Joint Genome Institute"/>
            <person name="Copeland A."/>
            <person name="Lucas S."/>
            <person name="Lapidus A."/>
            <person name="Barry K."/>
            <person name="Detter J.C."/>
            <person name="Glavina del Rio T."/>
            <person name="Hammon N."/>
            <person name="Israni S."/>
            <person name="Dalin E."/>
            <person name="Tice H."/>
            <person name="Pitluck S."/>
            <person name="Chain P."/>
            <person name="Malfatti S."/>
            <person name="Shin M."/>
            <person name="Vergez L."/>
            <person name="Schmutz J."/>
            <person name="Larimer F."/>
            <person name="Land M."/>
            <person name="Hauser L."/>
            <person name="Kyrpides N."/>
            <person name="Lykidis A."/>
            <person name="Tiedje J."/>
            <person name="Richardson P."/>
        </authorList>
    </citation>
    <scope>NUCLEOTIDE SEQUENCE [LARGE SCALE GENOMIC DNA]</scope>
    <source>
        <strain>W3-18-1</strain>
    </source>
</reference>
<keyword id="KW-0143">Chaperone</keyword>
<keyword id="KW-0574">Periplasm</keyword>
<keyword id="KW-0653">Protein transport</keyword>
<keyword id="KW-0732">Signal</keyword>
<keyword id="KW-0813">Transport</keyword>
<organism>
    <name type="scientific">Shewanella sp. (strain W3-18-1)</name>
    <dbReference type="NCBI Taxonomy" id="351745"/>
    <lineage>
        <taxon>Bacteria</taxon>
        <taxon>Pseudomonadati</taxon>
        <taxon>Pseudomonadota</taxon>
        <taxon>Gammaproteobacteria</taxon>
        <taxon>Alteromonadales</taxon>
        <taxon>Shewanellaceae</taxon>
        <taxon>Shewanella</taxon>
    </lineage>
</organism>
<protein>
    <recommendedName>
        <fullName evidence="1">Outer-membrane lipoprotein carrier protein</fullName>
    </recommendedName>
</protein>
<accession>A1RJJ1</accession>
<proteinExistence type="inferred from homology"/>
<sequence length="208" mass="23353">MKNLLCAVMLTSPLLYSTAVFADDAQQLRNTLVNTASLKTDFKQTVTDVNKKVIQTGSGILALAHPNQFYWHLTSPDESQIVADGKDLWIYNPFAEEVVIMDFAEAINASPIALLVHRDDTTWSQYSVTKKQDCYDIRPKAIDSGIVTVSVCFKNSQLTKFNVLDDKGNLSQFDLSNQKVITTEDKALFKFVLPENVDIDDQRLKTLN</sequence>
<evidence type="ECO:0000255" key="1">
    <source>
        <dbReference type="HAMAP-Rule" id="MF_00240"/>
    </source>
</evidence>
<feature type="signal peptide" evidence="1">
    <location>
        <begin position="1"/>
        <end position="22"/>
    </location>
</feature>
<feature type="chain" id="PRO_5000204013" description="Outer-membrane lipoprotein carrier protein">
    <location>
        <begin position="23"/>
        <end position="208"/>
    </location>
</feature>
<name>LOLA_SHESW</name>
<comment type="function">
    <text evidence="1">Participates in the translocation of lipoproteins from the inner membrane to the outer membrane. Only forms a complex with a lipoprotein if the residue after the N-terminal Cys is not an aspartate (The Asp acts as a targeting signal to indicate that the lipoprotein should stay in the inner membrane).</text>
</comment>
<comment type="subunit">
    <text evidence="1">Monomer.</text>
</comment>
<comment type="subcellular location">
    <subcellularLocation>
        <location evidence="1">Periplasm</location>
    </subcellularLocation>
</comment>
<comment type="similarity">
    <text evidence="1">Belongs to the LolA family.</text>
</comment>
<dbReference type="EMBL" id="CP000503">
    <property type="protein sequence ID" value="ABM24836.1"/>
    <property type="molecule type" value="Genomic_DNA"/>
</dbReference>
<dbReference type="RefSeq" id="WP_011789324.1">
    <property type="nucleotide sequence ID" value="NC_008750.1"/>
</dbReference>
<dbReference type="SMR" id="A1RJJ1"/>
<dbReference type="KEGG" id="shw:Sputw3181_2002"/>
<dbReference type="HOGENOM" id="CLU_087560_1_1_6"/>
<dbReference type="Proteomes" id="UP000002597">
    <property type="component" value="Chromosome"/>
</dbReference>
<dbReference type="GO" id="GO:0030288">
    <property type="term" value="C:outer membrane-bounded periplasmic space"/>
    <property type="evidence" value="ECO:0007669"/>
    <property type="project" value="TreeGrafter"/>
</dbReference>
<dbReference type="GO" id="GO:0044874">
    <property type="term" value="P:lipoprotein localization to outer membrane"/>
    <property type="evidence" value="ECO:0007669"/>
    <property type="project" value="UniProtKB-UniRule"/>
</dbReference>
<dbReference type="GO" id="GO:0042953">
    <property type="term" value="P:lipoprotein transport"/>
    <property type="evidence" value="ECO:0007669"/>
    <property type="project" value="InterPro"/>
</dbReference>
<dbReference type="CDD" id="cd16325">
    <property type="entry name" value="LolA"/>
    <property type="match status" value="1"/>
</dbReference>
<dbReference type="Gene3D" id="2.50.20.10">
    <property type="entry name" value="Lipoprotein localisation LolA/LolB/LppX"/>
    <property type="match status" value="1"/>
</dbReference>
<dbReference type="HAMAP" id="MF_00240">
    <property type="entry name" value="LolA"/>
    <property type="match status" value="1"/>
</dbReference>
<dbReference type="InterPro" id="IPR029046">
    <property type="entry name" value="LolA/LolB/LppX"/>
</dbReference>
<dbReference type="InterPro" id="IPR004564">
    <property type="entry name" value="OM_lipoprot_carrier_LolA-like"/>
</dbReference>
<dbReference type="InterPro" id="IPR018323">
    <property type="entry name" value="OM_lipoprot_carrier_LolA_Pbac"/>
</dbReference>
<dbReference type="NCBIfam" id="TIGR00547">
    <property type="entry name" value="lolA"/>
    <property type="match status" value="1"/>
</dbReference>
<dbReference type="PANTHER" id="PTHR35869">
    <property type="entry name" value="OUTER-MEMBRANE LIPOPROTEIN CARRIER PROTEIN"/>
    <property type="match status" value="1"/>
</dbReference>
<dbReference type="PANTHER" id="PTHR35869:SF1">
    <property type="entry name" value="OUTER-MEMBRANE LIPOPROTEIN CARRIER PROTEIN"/>
    <property type="match status" value="1"/>
</dbReference>
<dbReference type="Pfam" id="PF03548">
    <property type="entry name" value="LolA"/>
    <property type="match status" value="1"/>
</dbReference>
<dbReference type="SUPFAM" id="SSF89392">
    <property type="entry name" value="Prokaryotic lipoproteins and lipoprotein localization factors"/>
    <property type="match status" value="1"/>
</dbReference>
<gene>
    <name evidence="1" type="primary">lolA</name>
    <name type="ordered locus">Sputw3181_2002</name>
</gene>